<comment type="function">
    <text evidence="1">NDH-1 shuttles electrons from NADH, via FMN and iron-sulfur (Fe-S) centers, to quinones in the respiratory chain. Couples the redox reaction to proton translocation (for every two electrons transferred, four hydrogen ions are translocated across the cytoplasmic membrane), and thus conserves the redox energy in a proton gradient (By similarity).</text>
</comment>
<comment type="catalytic activity">
    <reaction evidence="2">
        <text>a quinone + NADH + 5 H(+)(in) = a quinol + NAD(+) + 4 H(+)(out)</text>
        <dbReference type="Rhea" id="RHEA:57888"/>
        <dbReference type="ChEBI" id="CHEBI:15378"/>
        <dbReference type="ChEBI" id="CHEBI:24646"/>
        <dbReference type="ChEBI" id="CHEBI:57540"/>
        <dbReference type="ChEBI" id="CHEBI:57945"/>
        <dbReference type="ChEBI" id="CHEBI:132124"/>
    </reaction>
</comment>
<comment type="cofactor">
    <cofactor evidence="2">
        <name>[4Fe-4S] cluster</name>
        <dbReference type="ChEBI" id="CHEBI:49883"/>
    </cofactor>
    <text evidence="2">Binds 1 [4Fe-4S] cluster.</text>
</comment>
<comment type="subunit">
    <text evidence="2">NDH-1 is composed of 14 different subunits. Subunits NuoB, C, D, E, F, and G constitute the peripheral sector of the complex.</text>
</comment>
<comment type="subcellular location">
    <subcellularLocation>
        <location evidence="2">Cell inner membrane</location>
        <topology evidence="2">Peripheral membrane protein</topology>
        <orientation evidence="2">Cytoplasmic side</orientation>
    </subcellularLocation>
</comment>
<comment type="similarity">
    <text evidence="2">Belongs to the complex I 20 kDa subunit family.</text>
</comment>
<comment type="sequence caution" evidence="3">
    <conflict type="erroneous initiation">
        <sequence resource="EMBL-CDS" id="CAP42017"/>
    </conflict>
</comment>
<feature type="chain" id="PRO_0000358354" description="NADH-quinone oxidoreductase subunit B">
    <location>
        <begin position="1"/>
        <end position="158"/>
    </location>
</feature>
<feature type="binding site" evidence="2">
    <location>
        <position position="37"/>
    </location>
    <ligand>
        <name>[4Fe-4S] cluster</name>
        <dbReference type="ChEBI" id="CHEBI:49883"/>
    </ligand>
</feature>
<feature type="binding site" evidence="2">
    <location>
        <position position="38"/>
    </location>
    <ligand>
        <name>[4Fe-4S] cluster</name>
        <dbReference type="ChEBI" id="CHEBI:49883"/>
    </ligand>
</feature>
<feature type="binding site" evidence="2">
    <location>
        <position position="102"/>
    </location>
    <ligand>
        <name>[4Fe-4S] cluster</name>
        <dbReference type="ChEBI" id="CHEBI:49883"/>
    </ligand>
</feature>
<feature type="binding site" evidence="2">
    <location>
        <position position="132"/>
    </location>
    <ligand>
        <name>[4Fe-4S] cluster</name>
        <dbReference type="ChEBI" id="CHEBI:49883"/>
    </ligand>
</feature>
<organism>
    <name type="scientific">Bordetella petrii (strain ATCC BAA-461 / DSM 12804 / CCUG 43448)</name>
    <dbReference type="NCBI Taxonomy" id="340100"/>
    <lineage>
        <taxon>Bacteria</taxon>
        <taxon>Pseudomonadati</taxon>
        <taxon>Pseudomonadota</taxon>
        <taxon>Betaproteobacteria</taxon>
        <taxon>Burkholderiales</taxon>
        <taxon>Alcaligenaceae</taxon>
        <taxon>Bordetella</taxon>
    </lineage>
</organism>
<keyword id="KW-0004">4Fe-4S</keyword>
<keyword id="KW-0997">Cell inner membrane</keyword>
<keyword id="KW-1003">Cell membrane</keyword>
<keyword id="KW-0408">Iron</keyword>
<keyword id="KW-0411">Iron-sulfur</keyword>
<keyword id="KW-0472">Membrane</keyword>
<keyword id="KW-0479">Metal-binding</keyword>
<keyword id="KW-0520">NAD</keyword>
<keyword id="KW-0874">Quinone</keyword>
<keyword id="KW-1278">Translocase</keyword>
<keyword id="KW-0813">Transport</keyword>
<keyword id="KW-0830">Ubiquinone</keyword>
<sequence>MAIDGILKQGFITTSADKFLNWAKTGSMWPMTFGLACCAVEMMHAGAARYDLDQFGIIFRPSPRQSDLMIVAGTLCNKMAPALRKVYDQMPEPRWVVSMGSCANGGGYYHYSYSVVRGCDRIVPVDVYVPGCPPTAEALVYGLLQMQNKIRLTNTIAR</sequence>
<gene>
    <name evidence="2" type="primary">nuoB</name>
    <name type="ordered locus">Bpet1678</name>
</gene>
<reference key="1">
    <citation type="journal article" date="2008" name="BMC Genomics">
        <title>The missing link: Bordetella petrii is endowed with both the metabolic versatility of environmental bacteria and virulence traits of pathogenic Bordetellae.</title>
        <authorList>
            <person name="Gross R."/>
            <person name="Guzman C.A."/>
            <person name="Sebaihia M."/>
            <person name="Martin dos Santos V.A.P."/>
            <person name="Pieper D.H."/>
            <person name="Koebnik R."/>
            <person name="Lechner M."/>
            <person name="Bartels D."/>
            <person name="Buhrmester J."/>
            <person name="Choudhuri J.V."/>
            <person name="Ebensen T."/>
            <person name="Gaigalat L."/>
            <person name="Herrmann S."/>
            <person name="Khachane A.N."/>
            <person name="Larisch C."/>
            <person name="Link S."/>
            <person name="Linke B."/>
            <person name="Meyer F."/>
            <person name="Mormann S."/>
            <person name="Nakunst D."/>
            <person name="Rueckert C."/>
            <person name="Schneiker-Bekel S."/>
            <person name="Schulze K."/>
            <person name="Voerholter F.-J."/>
            <person name="Yevsa T."/>
            <person name="Engle J.T."/>
            <person name="Goldman W.E."/>
            <person name="Puehler A."/>
            <person name="Goebel U.B."/>
            <person name="Goesmann A."/>
            <person name="Bloecker H."/>
            <person name="Kaiser O."/>
            <person name="Martinez-Arias R."/>
        </authorList>
    </citation>
    <scope>NUCLEOTIDE SEQUENCE [LARGE SCALE GENOMIC DNA]</scope>
    <source>
        <strain>ATCC BAA-461 / DSM 12804 / CCUG 43448</strain>
    </source>
</reference>
<proteinExistence type="inferred from homology"/>
<dbReference type="EC" id="7.1.1.-" evidence="2"/>
<dbReference type="EMBL" id="AM902716">
    <property type="protein sequence ID" value="CAP42017.1"/>
    <property type="status" value="ALT_INIT"/>
    <property type="molecule type" value="Genomic_DNA"/>
</dbReference>
<dbReference type="SMR" id="A9II02"/>
<dbReference type="STRING" id="94624.Bpet1678"/>
<dbReference type="KEGG" id="bpt:Bpet1678"/>
<dbReference type="eggNOG" id="COG0377">
    <property type="taxonomic scope" value="Bacteria"/>
</dbReference>
<dbReference type="Proteomes" id="UP000001225">
    <property type="component" value="Chromosome"/>
</dbReference>
<dbReference type="GO" id="GO:0005886">
    <property type="term" value="C:plasma membrane"/>
    <property type="evidence" value="ECO:0007669"/>
    <property type="project" value="UniProtKB-SubCell"/>
</dbReference>
<dbReference type="GO" id="GO:0045271">
    <property type="term" value="C:respiratory chain complex I"/>
    <property type="evidence" value="ECO:0007669"/>
    <property type="project" value="TreeGrafter"/>
</dbReference>
<dbReference type="GO" id="GO:0051539">
    <property type="term" value="F:4 iron, 4 sulfur cluster binding"/>
    <property type="evidence" value="ECO:0007669"/>
    <property type="project" value="UniProtKB-KW"/>
</dbReference>
<dbReference type="GO" id="GO:0005506">
    <property type="term" value="F:iron ion binding"/>
    <property type="evidence" value="ECO:0007669"/>
    <property type="project" value="UniProtKB-UniRule"/>
</dbReference>
<dbReference type="GO" id="GO:0008137">
    <property type="term" value="F:NADH dehydrogenase (ubiquinone) activity"/>
    <property type="evidence" value="ECO:0007669"/>
    <property type="project" value="InterPro"/>
</dbReference>
<dbReference type="GO" id="GO:0050136">
    <property type="term" value="F:NADH:ubiquinone reductase (non-electrogenic) activity"/>
    <property type="evidence" value="ECO:0007669"/>
    <property type="project" value="UniProtKB-UniRule"/>
</dbReference>
<dbReference type="GO" id="GO:0048038">
    <property type="term" value="F:quinone binding"/>
    <property type="evidence" value="ECO:0007669"/>
    <property type="project" value="UniProtKB-KW"/>
</dbReference>
<dbReference type="GO" id="GO:0009060">
    <property type="term" value="P:aerobic respiration"/>
    <property type="evidence" value="ECO:0007669"/>
    <property type="project" value="TreeGrafter"/>
</dbReference>
<dbReference type="GO" id="GO:0015990">
    <property type="term" value="P:electron transport coupled proton transport"/>
    <property type="evidence" value="ECO:0007669"/>
    <property type="project" value="TreeGrafter"/>
</dbReference>
<dbReference type="FunFam" id="3.40.50.12280:FF:000001">
    <property type="entry name" value="NADH-quinone oxidoreductase subunit B 2"/>
    <property type="match status" value="1"/>
</dbReference>
<dbReference type="Gene3D" id="3.40.50.12280">
    <property type="match status" value="1"/>
</dbReference>
<dbReference type="HAMAP" id="MF_01356">
    <property type="entry name" value="NDH1_NuoB"/>
    <property type="match status" value="1"/>
</dbReference>
<dbReference type="InterPro" id="IPR006137">
    <property type="entry name" value="NADH_UbQ_OxRdtase-like_20kDa"/>
</dbReference>
<dbReference type="InterPro" id="IPR006138">
    <property type="entry name" value="NADH_UQ_OxRdtase_20Kd_su"/>
</dbReference>
<dbReference type="NCBIfam" id="TIGR01957">
    <property type="entry name" value="nuoB_fam"/>
    <property type="match status" value="1"/>
</dbReference>
<dbReference type="NCBIfam" id="NF005012">
    <property type="entry name" value="PRK06411.1"/>
    <property type="match status" value="1"/>
</dbReference>
<dbReference type="PANTHER" id="PTHR11995">
    <property type="entry name" value="NADH DEHYDROGENASE"/>
    <property type="match status" value="1"/>
</dbReference>
<dbReference type="PANTHER" id="PTHR11995:SF14">
    <property type="entry name" value="NADH DEHYDROGENASE [UBIQUINONE] IRON-SULFUR PROTEIN 7, MITOCHONDRIAL"/>
    <property type="match status" value="1"/>
</dbReference>
<dbReference type="Pfam" id="PF01058">
    <property type="entry name" value="Oxidored_q6"/>
    <property type="match status" value="1"/>
</dbReference>
<dbReference type="SUPFAM" id="SSF56770">
    <property type="entry name" value="HydA/Nqo6-like"/>
    <property type="match status" value="1"/>
</dbReference>
<dbReference type="PROSITE" id="PS01150">
    <property type="entry name" value="COMPLEX1_20K"/>
    <property type="match status" value="1"/>
</dbReference>
<accession>A9II02</accession>
<name>NUOB_BORPD</name>
<evidence type="ECO:0000250" key="1"/>
<evidence type="ECO:0000255" key="2">
    <source>
        <dbReference type="HAMAP-Rule" id="MF_01356"/>
    </source>
</evidence>
<evidence type="ECO:0000305" key="3"/>
<protein>
    <recommendedName>
        <fullName evidence="2">NADH-quinone oxidoreductase subunit B</fullName>
        <ecNumber evidence="2">7.1.1.-</ecNumber>
    </recommendedName>
    <alternativeName>
        <fullName evidence="2">NADH dehydrogenase I subunit B</fullName>
    </alternativeName>
    <alternativeName>
        <fullName evidence="2">NDH-1 subunit B</fullName>
    </alternativeName>
</protein>